<comment type="function">
    <text evidence="7">Binds fibroblast growth factor and E-selectin (cell-adhesion lectin on endothelial cells mediating the binding of neutrophils).</text>
</comment>
<comment type="subcellular location">
    <subcellularLocation>
        <location evidence="6">Golgi apparatus membrane</location>
        <topology evidence="3">Single-pass type I membrane protein</topology>
    </subcellularLocation>
    <subcellularLocation>
        <location evidence="2">Golgi outpost</location>
    </subcellularLocation>
    <subcellularLocation>
        <location evidence="2">Cytoplasm</location>
        <location evidence="2">Cytoskeleton</location>
        <location evidence="2">Microtubule organizing center</location>
    </subcellularLocation>
    <text evidence="2">Golgi medial cisternae. Localizes to the postsynaptic Golgi apparatus region, also named Golgi outpost, which shapes dendrite morphology by functioning as sites of acentrosomal microtubule nucleation.</text>
</comment>
<comment type="alternative products">
    <event type="alternative splicing"/>
    <isoform>
        <id>Q92896-1</id>
        <name>1</name>
        <sequence type="displayed"/>
    </isoform>
    <isoform>
        <id>Q92896-2</id>
        <name>2</name>
        <sequence type="described" ref="VSP_035998"/>
    </isoform>
    <isoform>
        <id>Q92896-3</id>
        <name>3</name>
        <sequence type="described" ref="VSP_043472 VSP_035998"/>
    </isoform>
</comment>
<comment type="tissue specificity">
    <text evidence="8">Widely expressed. Highest levels in pancreas, skeletal muscle, placenta, heart, testis and ovary. Also found in the kidney, liver, lung and brain.</text>
</comment>
<comment type="developmental stage">
    <text>Expressed both in adult and fetal tissues.</text>
</comment>
<comment type="PTM">
    <text evidence="1">Fucosylation is essential for binding to E-selectin.</text>
</comment>
<comment type="PTM">
    <text evidence="2">N-glycosylated. Contains sialic acid residues.</text>
</comment>
<comment type="sequence caution" evidence="11">
    <conflict type="frameshift">
        <sequence resource="EMBL-CDS" id="AAB02178"/>
    </conflict>
</comment>
<keyword id="KW-0025">Alternative splicing</keyword>
<keyword id="KW-0963">Cytoplasm</keyword>
<keyword id="KW-0206">Cytoskeleton</keyword>
<keyword id="KW-0325">Glycoprotein</keyword>
<keyword id="KW-0333">Golgi apparatus</keyword>
<keyword id="KW-0472">Membrane</keyword>
<keyword id="KW-0597">Phosphoprotein</keyword>
<keyword id="KW-1267">Proteomics identification</keyword>
<keyword id="KW-1185">Reference proteome</keyword>
<keyword id="KW-0677">Repeat</keyword>
<keyword id="KW-0730">Sialic acid</keyword>
<keyword id="KW-0732">Signal</keyword>
<keyword id="KW-0812">Transmembrane</keyword>
<keyword id="KW-1133">Transmembrane helix</keyword>
<protein>
    <recommendedName>
        <fullName>Golgi apparatus protein 1</fullName>
    </recommendedName>
    <alternativeName>
        <fullName>CFR-1</fullName>
    </alternativeName>
    <alternativeName>
        <fullName>Cysteine-rich fibroblast growth factor receptor</fullName>
    </alternativeName>
    <alternativeName>
        <fullName>E-selectin ligand 1</fullName>
        <shortName>ESL-1</shortName>
    </alternativeName>
    <alternativeName>
        <fullName>Golgi sialoglycoprotein MG-160</fullName>
    </alternativeName>
</protein>
<feature type="signal peptide" evidence="3">
    <location>
        <begin position="1"/>
        <end position="29"/>
    </location>
</feature>
<feature type="chain" id="PRO_0000011120" description="Golgi apparatus protein 1">
    <location>
        <begin position="30"/>
        <end position="1179"/>
    </location>
</feature>
<feature type="topological domain" description="Extracellular" evidence="3">
    <location>
        <begin position="30"/>
        <end position="1145"/>
    </location>
</feature>
<feature type="transmembrane region" description="Helical" evidence="3">
    <location>
        <begin position="1146"/>
        <end position="1166"/>
    </location>
</feature>
<feature type="topological domain" description="Cytoplasmic" evidence="3">
    <location>
        <begin position="1167"/>
        <end position="1179"/>
    </location>
</feature>
<feature type="repeat" description="Cys-rich GLG1 1">
    <location>
        <begin position="116"/>
        <end position="149"/>
    </location>
</feature>
<feature type="repeat" description="Cys-rich GLG1 2">
    <location>
        <begin position="150"/>
        <end position="212"/>
    </location>
</feature>
<feature type="repeat" description="Cys-rich GLG1 3">
    <location>
        <begin position="215"/>
        <end position="278"/>
    </location>
</feature>
<feature type="repeat" description="Cys-rich GLG1 4">
    <location>
        <begin position="286"/>
        <end position="346"/>
    </location>
</feature>
<feature type="repeat" description="Cys-rich GLG1 5">
    <location>
        <begin position="347"/>
        <end position="413"/>
    </location>
</feature>
<feature type="repeat" description="Cys-rich GLG1 6">
    <location>
        <begin position="414"/>
        <end position="473"/>
    </location>
</feature>
<feature type="repeat" description="Cys-rich GLG1 7">
    <location>
        <begin position="475"/>
        <end position="537"/>
    </location>
</feature>
<feature type="repeat" description="Cys-rich GLG1 8">
    <location>
        <begin position="538"/>
        <end position="604"/>
    </location>
</feature>
<feature type="repeat" description="Cys-rich GLG1 9">
    <location>
        <begin position="609"/>
        <end position="668"/>
    </location>
</feature>
<feature type="repeat" description="Cys-rich GLG1 10">
    <location>
        <begin position="670"/>
        <end position="728"/>
    </location>
</feature>
<feature type="repeat" description="Cys-rich GLG1 11">
    <location>
        <begin position="729"/>
        <end position="788"/>
    </location>
</feature>
<feature type="repeat" description="Cys-rich GLG1 12">
    <location>
        <begin position="796"/>
        <end position="856"/>
    </location>
</feature>
<feature type="repeat" description="Cys-rich GLG1 13">
    <location>
        <begin position="858"/>
        <end position="911"/>
    </location>
</feature>
<feature type="repeat" description="Cys-rich GLG1 14">
    <location>
        <begin position="912"/>
        <end position="979"/>
    </location>
</feature>
<feature type="repeat" description="Cys-rich GLG1 15">
    <location>
        <begin position="980"/>
        <end position="1035"/>
    </location>
</feature>
<feature type="repeat" description="Cys-rich GLG1 16">
    <location>
        <begin position="1041"/>
        <end position="1101"/>
    </location>
</feature>
<feature type="region of interest" description="Disordered" evidence="4">
    <location>
        <begin position="32"/>
        <end position="112"/>
    </location>
</feature>
<feature type="compositionally biased region" description="Low complexity" evidence="4">
    <location>
        <begin position="60"/>
        <end position="84"/>
    </location>
</feature>
<feature type="compositionally biased region" description="Pro residues" evidence="4">
    <location>
        <begin position="85"/>
        <end position="96"/>
    </location>
</feature>
<feature type="modified residue" description="Phosphoserine" evidence="1">
    <location>
        <position position="961"/>
    </location>
</feature>
<feature type="glycosylation site" description="N-linked (GlcNAc...) asparagine" evidence="3">
    <location>
        <position position="165"/>
    </location>
</feature>
<feature type="glycosylation site" description="N-linked (GlcNAc...) asparagine" evidence="3">
    <location>
        <position position="210"/>
    </location>
</feature>
<feature type="glycosylation site" description="N-linked (GlcNAc...) asparagine" evidence="3">
    <location>
        <position position="581"/>
    </location>
</feature>
<feature type="glycosylation site" description="N-linked (GlcNAc...) asparagine" evidence="5">
    <location>
        <position position="677"/>
    </location>
</feature>
<feature type="glycosylation site" description="N-linked (GlcNAc...) asparagine" evidence="3">
    <location>
        <position position="786"/>
    </location>
</feature>
<feature type="splice variant" id="VSP_043472" description="In isoform 3." evidence="9">
    <location>
        <begin position="147"/>
        <end position="157"/>
    </location>
</feature>
<feature type="splice variant" id="VSP_035998" description="In isoform 2 and isoform 3." evidence="9 10">
    <original>R</original>
    <variation>RLQYRSETMAYKGLVWSQDVTGSPA</variation>
    <location>
        <position position="1179"/>
    </location>
</feature>
<feature type="sequence conflict" description="In Ref. 1; AAB06460." evidence="11" ref="1">
    <original>Q</original>
    <variation>H</variation>
    <location>
        <position position="33"/>
    </location>
</feature>
<feature type="sequence conflict" description="In Ref. 1; AAB06460." evidence="11" ref="1">
    <original>P</original>
    <variation>L</variation>
    <location>
        <position position="67"/>
    </location>
</feature>
<feature type="sequence conflict" description="In Ref. 1; AAB06460." evidence="11" ref="1">
    <original>P</original>
    <variation>L</variation>
    <location>
        <position position="85"/>
    </location>
</feature>
<feature type="sequence conflict" description="In Ref. 2; AAB02178." evidence="11" ref="2">
    <location>
        <position position="99"/>
    </location>
</feature>
<feature type="sequence conflict" description="In Ref. 2; AAB02178." evidence="11" ref="2">
    <original>L</original>
    <variation>S</variation>
    <location>
        <position position="526"/>
    </location>
</feature>
<feature type="sequence conflict" description="In Ref. 2; AAB02178." evidence="11" ref="2">
    <original>N</original>
    <variation>T</variation>
    <location>
        <position position="702"/>
    </location>
</feature>
<feature type="sequence conflict" description="In Ref. 2; AAB02178." evidence="11" ref="2">
    <location>
        <position position="707"/>
    </location>
</feature>
<feature type="sequence conflict" description="In Ref. 2; AAB02178." evidence="11" ref="2">
    <original>I</original>
    <variation>L</variation>
    <location>
        <position position="1082"/>
    </location>
</feature>
<feature type="modified residue" description="Phosphoserine" evidence="12">
    <location sequence="Q92896-2">
        <position position="1201"/>
    </location>
</feature>
<feature type="modified residue" description="Phosphoserine" evidence="12">
    <location sequence="Q92896-3">
        <position position="1190"/>
    </location>
</feature>
<reference key="1">
    <citation type="journal article" date="1996" name="DNA Cell Biol.">
        <title>Cloning and sequence analysis of the human MG160, a fibroblast growth factor and E-selectin binding membrane sialoglycoprotein of the Golgi apparatus.</title>
        <authorList>
            <person name="Mourelatos Z."/>
            <person name="Gonatas J.O."/>
            <person name="Cinato E."/>
            <person name="Gonatas N.K."/>
        </authorList>
    </citation>
    <scope>NUCLEOTIDE SEQUENCE [MRNA] (ISOFORM 1)</scope>
    <scope>FUNCTION</scope>
    <source>
        <tissue>Fetal brain</tissue>
        <tissue>Lymphoblast</tissue>
    </source>
</reference>
<reference key="2">
    <citation type="submission" date="1995-06" db="EMBL/GenBank/DDBJ databases">
        <authorList>
            <person name="Wu M."/>
            <person name="Chen J."/>
            <person name="Tan Y.H."/>
            <person name="Hong W.J."/>
            <person name="Ting R."/>
        </authorList>
    </citation>
    <scope>NUCLEOTIDE SEQUENCE [MRNA] (ISOFORM 1)</scope>
</reference>
<reference key="3">
    <citation type="journal article" date="2004" name="Nat. Genet.">
        <title>Complete sequencing and characterization of 21,243 full-length human cDNAs.</title>
        <authorList>
            <person name="Ota T."/>
            <person name="Suzuki Y."/>
            <person name="Nishikawa T."/>
            <person name="Otsuki T."/>
            <person name="Sugiyama T."/>
            <person name="Irie R."/>
            <person name="Wakamatsu A."/>
            <person name="Hayashi K."/>
            <person name="Sato H."/>
            <person name="Nagai K."/>
            <person name="Kimura K."/>
            <person name="Makita H."/>
            <person name="Sekine M."/>
            <person name="Obayashi M."/>
            <person name="Nishi T."/>
            <person name="Shibahara T."/>
            <person name="Tanaka T."/>
            <person name="Ishii S."/>
            <person name="Yamamoto J."/>
            <person name="Saito K."/>
            <person name="Kawai Y."/>
            <person name="Isono Y."/>
            <person name="Nakamura Y."/>
            <person name="Nagahari K."/>
            <person name="Murakami K."/>
            <person name="Yasuda T."/>
            <person name="Iwayanagi T."/>
            <person name="Wagatsuma M."/>
            <person name="Shiratori A."/>
            <person name="Sudo H."/>
            <person name="Hosoiri T."/>
            <person name="Kaku Y."/>
            <person name="Kodaira H."/>
            <person name="Kondo H."/>
            <person name="Sugawara M."/>
            <person name="Takahashi M."/>
            <person name="Kanda K."/>
            <person name="Yokoi T."/>
            <person name="Furuya T."/>
            <person name="Kikkawa E."/>
            <person name="Omura Y."/>
            <person name="Abe K."/>
            <person name="Kamihara K."/>
            <person name="Katsuta N."/>
            <person name="Sato K."/>
            <person name="Tanikawa M."/>
            <person name="Yamazaki M."/>
            <person name="Ninomiya K."/>
            <person name="Ishibashi T."/>
            <person name="Yamashita H."/>
            <person name="Murakawa K."/>
            <person name="Fujimori K."/>
            <person name="Tanai H."/>
            <person name="Kimata M."/>
            <person name="Watanabe M."/>
            <person name="Hiraoka S."/>
            <person name="Chiba Y."/>
            <person name="Ishida S."/>
            <person name="Ono Y."/>
            <person name="Takiguchi S."/>
            <person name="Watanabe S."/>
            <person name="Yosida M."/>
            <person name="Hotuta T."/>
            <person name="Kusano J."/>
            <person name="Kanehori K."/>
            <person name="Takahashi-Fujii A."/>
            <person name="Hara H."/>
            <person name="Tanase T.-O."/>
            <person name="Nomura Y."/>
            <person name="Togiya S."/>
            <person name="Komai F."/>
            <person name="Hara R."/>
            <person name="Takeuchi K."/>
            <person name="Arita M."/>
            <person name="Imose N."/>
            <person name="Musashino K."/>
            <person name="Yuuki H."/>
            <person name="Oshima A."/>
            <person name="Sasaki N."/>
            <person name="Aotsuka S."/>
            <person name="Yoshikawa Y."/>
            <person name="Matsunawa H."/>
            <person name="Ichihara T."/>
            <person name="Shiohata N."/>
            <person name="Sano S."/>
            <person name="Moriya S."/>
            <person name="Momiyama H."/>
            <person name="Satoh N."/>
            <person name="Takami S."/>
            <person name="Terashima Y."/>
            <person name="Suzuki O."/>
            <person name="Nakagawa S."/>
            <person name="Senoh A."/>
            <person name="Mizoguchi H."/>
            <person name="Goto Y."/>
            <person name="Shimizu F."/>
            <person name="Wakebe H."/>
            <person name="Hishigaki H."/>
            <person name="Watanabe T."/>
            <person name="Sugiyama A."/>
            <person name="Takemoto M."/>
            <person name="Kawakami B."/>
            <person name="Yamazaki M."/>
            <person name="Watanabe K."/>
            <person name="Kumagai A."/>
            <person name="Itakura S."/>
            <person name="Fukuzumi Y."/>
            <person name="Fujimori Y."/>
            <person name="Komiyama M."/>
            <person name="Tashiro H."/>
            <person name="Tanigami A."/>
            <person name="Fujiwara T."/>
            <person name="Ono T."/>
            <person name="Yamada K."/>
            <person name="Fujii Y."/>
            <person name="Ozaki K."/>
            <person name="Hirao M."/>
            <person name="Ohmori Y."/>
            <person name="Kawabata A."/>
            <person name="Hikiji T."/>
            <person name="Kobatake N."/>
            <person name="Inagaki H."/>
            <person name="Ikema Y."/>
            <person name="Okamoto S."/>
            <person name="Okitani R."/>
            <person name="Kawakami T."/>
            <person name="Noguchi S."/>
            <person name="Itoh T."/>
            <person name="Shigeta K."/>
            <person name="Senba T."/>
            <person name="Matsumura K."/>
            <person name="Nakajima Y."/>
            <person name="Mizuno T."/>
            <person name="Morinaga M."/>
            <person name="Sasaki M."/>
            <person name="Togashi T."/>
            <person name="Oyama M."/>
            <person name="Hata H."/>
            <person name="Watanabe M."/>
            <person name="Komatsu T."/>
            <person name="Mizushima-Sugano J."/>
            <person name="Satoh T."/>
            <person name="Shirai Y."/>
            <person name="Takahashi Y."/>
            <person name="Nakagawa K."/>
            <person name="Okumura K."/>
            <person name="Nagase T."/>
            <person name="Nomura N."/>
            <person name="Kikuchi H."/>
            <person name="Masuho Y."/>
            <person name="Yamashita R."/>
            <person name="Nakai K."/>
            <person name="Yada T."/>
            <person name="Nakamura Y."/>
            <person name="Ohara O."/>
            <person name="Isogai T."/>
            <person name="Sugano S."/>
        </authorList>
    </citation>
    <scope>NUCLEOTIDE SEQUENCE [LARGE SCALE MRNA] (ISOFORM 3)</scope>
    <source>
        <tissue>Trachea</tissue>
    </source>
</reference>
<reference key="4">
    <citation type="journal article" date="2004" name="Nature">
        <title>The sequence and analysis of duplication-rich human chromosome 16.</title>
        <authorList>
            <person name="Martin J."/>
            <person name="Han C."/>
            <person name="Gordon L.A."/>
            <person name="Terry A."/>
            <person name="Prabhakar S."/>
            <person name="She X."/>
            <person name="Xie G."/>
            <person name="Hellsten U."/>
            <person name="Chan Y.M."/>
            <person name="Altherr M."/>
            <person name="Couronne O."/>
            <person name="Aerts A."/>
            <person name="Bajorek E."/>
            <person name="Black S."/>
            <person name="Blumer H."/>
            <person name="Branscomb E."/>
            <person name="Brown N.C."/>
            <person name="Bruno W.J."/>
            <person name="Buckingham J.M."/>
            <person name="Callen D.F."/>
            <person name="Campbell C.S."/>
            <person name="Campbell M.L."/>
            <person name="Campbell E.W."/>
            <person name="Caoile C."/>
            <person name="Challacombe J.F."/>
            <person name="Chasteen L.A."/>
            <person name="Chertkov O."/>
            <person name="Chi H.C."/>
            <person name="Christensen M."/>
            <person name="Clark L.M."/>
            <person name="Cohn J.D."/>
            <person name="Denys M."/>
            <person name="Detter J.C."/>
            <person name="Dickson M."/>
            <person name="Dimitrijevic-Bussod M."/>
            <person name="Escobar J."/>
            <person name="Fawcett J.J."/>
            <person name="Flowers D."/>
            <person name="Fotopulos D."/>
            <person name="Glavina T."/>
            <person name="Gomez M."/>
            <person name="Gonzales E."/>
            <person name="Goodstein D."/>
            <person name="Goodwin L.A."/>
            <person name="Grady D.L."/>
            <person name="Grigoriev I."/>
            <person name="Groza M."/>
            <person name="Hammon N."/>
            <person name="Hawkins T."/>
            <person name="Haydu L."/>
            <person name="Hildebrand C.E."/>
            <person name="Huang W."/>
            <person name="Israni S."/>
            <person name="Jett J."/>
            <person name="Jewett P.B."/>
            <person name="Kadner K."/>
            <person name="Kimball H."/>
            <person name="Kobayashi A."/>
            <person name="Krawczyk M.-C."/>
            <person name="Leyba T."/>
            <person name="Longmire J.L."/>
            <person name="Lopez F."/>
            <person name="Lou Y."/>
            <person name="Lowry S."/>
            <person name="Ludeman T."/>
            <person name="Manohar C.F."/>
            <person name="Mark G.A."/>
            <person name="McMurray K.L."/>
            <person name="Meincke L.J."/>
            <person name="Morgan J."/>
            <person name="Moyzis R.K."/>
            <person name="Mundt M.O."/>
            <person name="Munk A.C."/>
            <person name="Nandkeshwar R.D."/>
            <person name="Pitluck S."/>
            <person name="Pollard M."/>
            <person name="Predki P."/>
            <person name="Parson-Quintana B."/>
            <person name="Ramirez L."/>
            <person name="Rash S."/>
            <person name="Retterer J."/>
            <person name="Ricke D.O."/>
            <person name="Robinson D.L."/>
            <person name="Rodriguez A."/>
            <person name="Salamov A."/>
            <person name="Saunders E.H."/>
            <person name="Scott D."/>
            <person name="Shough T."/>
            <person name="Stallings R.L."/>
            <person name="Stalvey M."/>
            <person name="Sutherland R.D."/>
            <person name="Tapia R."/>
            <person name="Tesmer J.G."/>
            <person name="Thayer N."/>
            <person name="Thompson L.S."/>
            <person name="Tice H."/>
            <person name="Torney D.C."/>
            <person name="Tran-Gyamfi M."/>
            <person name="Tsai M."/>
            <person name="Ulanovsky L.E."/>
            <person name="Ustaszewska A."/>
            <person name="Vo N."/>
            <person name="White P.S."/>
            <person name="Williams A.L."/>
            <person name="Wills P.L."/>
            <person name="Wu J.-R."/>
            <person name="Wu K."/>
            <person name="Yang J."/>
            <person name="DeJong P."/>
            <person name="Bruce D."/>
            <person name="Doggett N.A."/>
            <person name="Deaven L."/>
            <person name="Schmutz J."/>
            <person name="Grimwood J."/>
            <person name="Richardson P."/>
            <person name="Rokhsar D.S."/>
            <person name="Eichler E.E."/>
            <person name="Gilna P."/>
            <person name="Lucas S.M."/>
            <person name="Myers R.M."/>
            <person name="Rubin E.M."/>
            <person name="Pennacchio L.A."/>
        </authorList>
    </citation>
    <scope>NUCLEOTIDE SEQUENCE [LARGE SCALE GENOMIC DNA]</scope>
</reference>
<reference key="5">
    <citation type="submission" date="2005-09" db="EMBL/GenBank/DDBJ databases">
        <authorList>
            <person name="Mural R.J."/>
            <person name="Istrail S."/>
            <person name="Sutton G.G."/>
            <person name="Florea L."/>
            <person name="Halpern A.L."/>
            <person name="Mobarry C.M."/>
            <person name="Lippert R."/>
            <person name="Walenz B."/>
            <person name="Shatkay H."/>
            <person name="Dew I."/>
            <person name="Miller J.R."/>
            <person name="Flanigan M.J."/>
            <person name="Edwards N.J."/>
            <person name="Bolanos R."/>
            <person name="Fasulo D."/>
            <person name="Halldorsson B.V."/>
            <person name="Hannenhalli S."/>
            <person name="Turner R."/>
            <person name="Yooseph S."/>
            <person name="Lu F."/>
            <person name="Nusskern D.R."/>
            <person name="Shue B.C."/>
            <person name="Zheng X.H."/>
            <person name="Zhong F."/>
            <person name="Delcher A.L."/>
            <person name="Huson D.H."/>
            <person name="Kravitz S.A."/>
            <person name="Mouchard L."/>
            <person name="Reinert K."/>
            <person name="Remington K.A."/>
            <person name="Clark A.G."/>
            <person name="Waterman M.S."/>
            <person name="Eichler E.E."/>
            <person name="Adams M.D."/>
            <person name="Hunkapiller M.W."/>
            <person name="Myers E.W."/>
            <person name="Venter J.C."/>
        </authorList>
    </citation>
    <scope>NUCLEOTIDE SEQUENCE [LARGE SCALE GENOMIC DNA]</scope>
</reference>
<reference key="6">
    <citation type="journal article" date="2004" name="Genome Res.">
        <title>The status, quality, and expansion of the NIH full-length cDNA project: the Mammalian Gene Collection (MGC).</title>
        <authorList>
            <consortium name="The MGC Project Team"/>
        </authorList>
    </citation>
    <scope>NUCLEOTIDE SEQUENCE [LARGE SCALE MRNA] (ISOFORM 2)</scope>
    <source>
        <tissue>Testis</tissue>
    </source>
</reference>
<reference key="7">
    <citation type="journal article" date="1990" name="J. Histochem. Cytochem.">
        <title>Immunocytochemical visualization of the Golgi apparatus in several species, including human, and tissues with an antiserum against MG-160, a sialoglycoprotein of rat Golgi apparatus.</title>
        <authorList>
            <person name="Croul S."/>
            <person name="Mezitis S.G.E."/>
            <person name="Stieber A."/>
            <person name="Chen Y.J."/>
            <person name="Gonatas J.O."/>
            <person name="Goud B."/>
            <person name="Gonatas N.K."/>
        </authorList>
    </citation>
    <scope>SUBCELLULAR LOCATION</scope>
</reference>
<reference key="8">
    <citation type="journal article" date="1997" name="Biochem. J.">
        <title>Latent transforming growth factor-beta complex in Chinese hamster ovary cells contains the multifunctional cysteine-rich fibroblast growth factor receptor, also termed E-selectin-ligand or MG-160.</title>
        <authorList>
            <person name="Olofsson A."/>
            <person name="Hellman U."/>
            <person name="Ten Dijke P."/>
            <person name="Grimsby S."/>
            <person name="Ichijo H."/>
            <person name="Moren A."/>
            <person name="Miyazono K."/>
            <person name="Heldin C.-H."/>
        </authorList>
    </citation>
    <scope>TISSUE SPECIFICITY</scope>
</reference>
<reference key="9">
    <citation type="journal article" date="2003" name="Nat. Biotechnol.">
        <title>Identification and quantification of N-linked glycoproteins using hydrazide chemistry, stable isotope labeling and mass spectrometry.</title>
        <authorList>
            <person name="Zhang H."/>
            <person name="Li X.-J."/>
            <person name="Martin D.B."/>
            <person name="Aebersold R."/>
        </authorList>
    </citation>
    <scope>GLYCOSYLATION AT ASN-677</scope>
</reference>
<reference key="10">
    <citation type="journal article" date="2008" name="Mol. Cell">
        <title>Kinase-selective enrichment enables quantitative phosphoproteomics of the kinome across the cell cycle.</title>
        <authorList>
            <person name="Daub H."/>
            <person name="Olsen J.V."/>
            <person name="Bairlein M."/>
            <person name="Gnad F."/>
            <person name="Oppermann F.S."/>
            <person name="Korner R."/>
            <person name="Greff Z."/>
            <person name="Keri G."/>
            <person name="Stemmann O."/>
            <person name="Mann M."/>
        </authorList>
    </citation>
    <scope>IDENTIFICATION BY MASS SPECTROMETRY [LARGE SCALE ANALYSIS]</scope>
    <source>
        <tissue>Cervix carcinoma</tissue>
    </source>
</reference>
<reference key="11">
    <citation type="journal article" date="2010" name="Sci. Signal.">
        <title>Quantitative phosphoproteomics reveals widespread full phosphorylation site occupancy during mitosis.</title>
        <authorList>
            <person name="Olsen J.V."/>
            <person name="Vermeulen M."/>
            <person name="Santamaria A."/>
            <person name="Kumar C."/>
            <person name="Miller M.L."/>
            <person name="Jensen L.J."/>
            <person name="Gnad F."/>
            <person name="Cox J."/>
            <person name="Jensen T.S."/>
            <person name="Nigg E.A."/>
            <person name="Brunak S."/>
            <person name="Mann M."/>
        </authorList>
    </citation>
    <scope>PHOSPHORYLATION [LARGE SCALE ANALYSIS] AT SER-1201 (ISOFORM 2)</scope>
    <scope>PHOSPHORYLATION [LARGE SCALE ANALYSIS] AT SER-1190 (ISOFORM 3)</scope>
    <scope>IDENTIFICATION BY MASS SPECTROMETRY [LARGE SCALE ANALYSIS]</scope>
    <source>
        <tissue>Cervix carcinoma</tissue>
    </source>
</reference>
<reference key="12">
    <citation type="journal article" date="2011" name="BMC Syst. Biol.">
        <title>Initial characterization of the human central proteome.</title>
        <authorList>
            <person name="Burkard T.R."/>
            <person name="Planyavsky M."/>
            <person name="Kaupe I."/>
            <person name="Breitwieser F.P."/>
            <person name="Buerckstuemmer T."/>
            <person name="Bennett K.L."/>
            <person name="Superti-Furga G."/>
            <person name="Colinge J."/>
        </authorList>
    </citation>
    <scope>IDENTIFICATION BY MASS SPECTROMETRY [LARGE SCALE ANALYSIS]</scope>
</reference>
<reference key="13">
    <citation type="journal article" date="2014" name="J. Proteomics">
        <title>An enzyme assisted RP-RPLC approach for in-depth analysis of human liver phosphoproteome.</title>
        <authorList>
            <person name="Bian Y."/>
            <person name="Song C."/>
            <person name="Cheng K."/>
            <person name="Dong M."/>
            <person name="Wang F."/>
            <person name="Huang J."/>
            <person name="Sun D."/>
            <person name="Wang L."/>
            <person name="Ye M."/>
            <person name="Zou H."/>
        </authorList>
    </citation>
    <scope>IDENTIFICATION BY MASS SPECTROMETRY [LARGE SCALE ANALYSIS]</scope>
    <source>
        <tissue>Liver</tissue>
    </source>
</reference>
<reference key="14">
    <citation type="journal article" date="2015" name="Proteomics">
        <title>N-terminome analysis of the human mitochondrial proteome.</title>
        <authorList>
            <person name="Vaca Jacome A.S."/>
            <person name="Rabilloud T."/>
            <person name="Schaeffer-Reiss C."/>
            <person name="Rompais M."/>
            <person name="Ayoub D."/>
            <person name="Lane L."/>
            <person name="Bairoch A."/>
            <person name="Van Dorsselaer A."/>
            <person name="Carapito C."/>
        </authorList>
    </citation>
    <scope>IDENTIFICATION BY MASS SPECTROMETRY [LARGE SCALE ANALYSIS]</scope>
</reference>
<proteinExistence type="evidence at protein level"/>
<name>GSLG1_HUMAN</name>
<sequence>MAACGRVRRMFRLSAALHLLLLFAAGAEKLPGQGVHSQGQGPGANFVSFVGQAGGGGPAGQQLPQLPQSSQLQQQQQQQQQQQQPQPPQPPFPAGGPPARRGGAGAGGGWKLAEEESCREDVTRVCPKHTWSNNLAVLECLQDVREPENEISSDCNHLLWNYKLNLTTDPKFESVAREVCKSTITEIKECADEPVGKGYMVSCLVDHRGNITEYQCHQYITKMTAIIFSDYRLICGFMDDCKNDINILKCGSIRLGEKDAHSQGEVVSCLEKGLVKEAEEREPKIQVSELCKKAILRVAELSSDDFHLDRHLYFACRDDRERFCENTQAGEGRVYKCLFNHKFEESMSEKCREALTTRQKLIAQDYKVSYSLAKSCKSDLKKYRCNVENLPRSREARLSYLLMCLESAVHRGRQVSSECQGEMLDYRRMLMEDFSLSPEIILSCRGEIEHHCSGLHRKGRTLHCLMKVVRGEKGNLGMNCQQALQTLIQETDPGADYRIDRALNEACESVIQTACKHIRSGDPMILSCLMEHLYTEKMVEDCEHRLLELQYFISRDWKLDPVLYRKCQGDASRLCHTHGWNETSEFMPQGAVFSCLYRHAYRTEEQGRRLSRECRAEVQRILHQRAMDVKLDPALQDKCLIDLGKWCSEKTETGQELECLQDHLDDLVVECRDIVGNLTELESEDIQIEALLMRACEPIIQNFCHDVADNQIDSGDLMECLIQNKHQKDMNEKCAIGVTHFQLVQMKDFRFSYKFKMACKEDVLKLCPNIKKKVDVVICLSTTVRNDTLQEAKEHRVSLKCRRQLRVEELEMTEDIRLEPDLYEACKSDIKNFCSAVQYGNAQIIECLKENKKQLSTRCHQKVFKLQETEMMDPELDYTLMRVCKQMIKRFCPEADSKTMLQCLKQNKNSELMDPKCKQMITKRQITQNTDYRLNPMLRKACKADIPKFCHGILTKAKDDSELEGQVISCLKLRYADQRLSSDCEDQIRIIIQESALDYRLDPQLQLHCSDEISSLCAEEAAAQEQTGQVEECLKVNLLKIKTELCKKEVLNMLKESKADIFVDPVLHTACALDIKHHCAAITPGRGRQMSCLMEALEDKRVRLQPECKKRLNDRIEMWSYAAKVAPADGFSDLAMQVMTSPSKNYILSVISGSICILFLIGLMCGRITKRVTRELKDR</sequence>
<evidence type="ECO:0000250" key="1">
    <source>
        <dbReference type="UniProtKB" id="Q61543"/>
    </source>
</evidence>
<evidence type="ECO:0000250" key="2">
    <source>
        <dbReference type="UniProtKB" id="Q62638"/>
    </source>
</evidence>
<evidence type="ECO:0000255" key="3"/>
<evidence type="ECO:0000256" key="4">
    <source>
        <dbReference type="SAM" id="MobiDB-lite"/>
    </source>
</evidence>
<evidence type="ECO:0000269" key="5">
    <source>
    </source>
</evidence>
<evidence type="ECO:0000269" key="6">
    <source>
    </source>
</evidence>
<evidence type="ECO:0000269" key="7">
    <source>
    </source>
</evidence>
<evidence type="ECO:0000269" key="8">
    <source>
    </source>
</evidence>
<evidence type="ECO:0000303" key="9">
    <source>
    </source>
</evidence>
<evidence type="ECO:0000303" key="10">
    <source>
    </source>
</evidence>
<evidence type="ECO:0000305" key="11"/>
<evidence type="ECO:0007744" key="12">
    <source>
    </source>
</evidence>
<organism>
    <name type="scientific">Homo sapiens</name>
    <name type="common">Human</name>
    <dbReference type="NCBI Taxonomy" id="9606"/>
    <lineage>
        <taxon>Eukaryota</taxon>
        <taxon>Metazoa</taxon>
        <taxon>Chordata</taxon>
        <taxon>Craniata</taxon>
        <taxon>Vertebrata</taxon>
        <taxon>Euteleostomi</taxon>
        <taxon>Mammalia</taxon>
        <taxon>Eutheria</taxon>
        <taxon>Euarchontoglires</taxon>
        <taxon>Primates</taxon>
        <taxon>Haplorrhini</taxon>
        <taxon>Catarrhini</taxon>
        <taxon>Hominidae</taxon>
        <taxon>Homo</taxon>
    </lineage>
</organism>
<dbReference type="EMBL" id="U64791">
    <property type="protein sequence ID" value="AAB06460.1"/>
    <property type="molecule type" value="mRNA"/>
</dbReference>
<dbReference type="EMBL" id="U28811">
    <property type="protein sequence ID" value="AAB02178.1"/>
    <property type="status" value="ALT_FRAME"/>
    <property type="molecule type" value="mRNA"/>
</dbReference>
<dbReference type="EMBL" id="AK304156">
    <property type="protein sequence ID" value="BAH14120.1"/>
    <property type="molecule type" value="mRNA"/>
</dbReference>
<dbReference type="EMBL" id="AC009053">
    <property type="status" value="NOT_ANNOTATED_CDS"/>
    <property type="molecule type" value="Genomic_DNA"/>
</dbReference>
<dbReference type="EMBL" id="AC009153">
    <property type="status" value="NOT_ANNOTATED_CDS"/>
    <property type="molecule type" value="Genomic_DNA"/>
</dbReference>
<dbReference type="EMBL" id="AC109599">
    <property type="status" value="NOT_ANNOTATED_CDS"/>
    <property type="molecule type" value="Genomic_DNA"/>
</dbReference>
<dbReference type="EMBL" id="CH471114">
    <property type="protein sequence ID" value="EAW95683.1"/>
    <property type="molecule type" value="Genomic_DNA"/>
</dbReference>
<dbReference type="EMBL" id="CH471114">
    <property type="protein sequence ID" value="EAW95682.1"/>
    <property type="molecule type" value="Genomic_DNA"/>
</dbReference>
<dbReference type="EMBL" id="CH471114">
    <property type="protein sequence ID" value="EAW95686.1"/>
    <property type="molecule type" value="Genomic_DNA"/>
</dbReference>
<dbReference type="EMBL" id="BC060822">
    <property type="protein sequence ID" value="AAH60822.1"/>
    <property type="molecule type" value="mRNA"/>
</dbReference>
<dbReference type="CCDS" id="CCDS32485.1">
    <molecule id="Q92896-2"/>
</dbReference>
<dbReference type="CCDS" id="CCDS45526.1">
    <molecule id="Q92896-3"/>
</dbReference>
<dbReference type="CCDS" id="CCDS45527.1">
    <molecule id="Q92896-1"/>
</dbReference>
<dbReference type="RefSeq" id="NP_001139138.1">
    <molecule id="Q92896-3"/>
    <property type="nucleotide sequence ID" value="NM_001145666.2"/>
</dbReference>
<dbReference type="RefSeq" id="NP_001139139.1">
    <molecule id="Q92896-1"/>
    <property type="nucleotide sequence ID" value="NM_001145667.2"/>
</dbReference>
<dbReference type="RefSeq" id="NP_036333.2">
    <molecule id="Q92896-2"/>
    <property type="nucleotide sequence ID" value="NM_012201.6"/>
</dbReference>
<dbReference type="SMR" id="Q92896"/>
<dbReference type="BioGRID" id="108996">
    <property type="interactions" value="139"/>
</dbReference>
<dbReference type="CORUM" id="Q92896"/>
<dbReference type="DIP" id="DIP-27582N"/>
<dbReference type="FunCoup" id="Q92896">
    <property type="interactions" value="3135"/>
</dbReference>
<dbReference type="IntAct" id="Q92896">
    <property type="interactions" value="64"/>
</dbReference>
<dbReference type="MINT" id="Q92896"/>
<dbReference type="STRING" id="9606.ENSP00000205061"/>
<dbReference type="GlyConnect" id="1280">
    <property type="glycosylation" value="42 N-Linked glycans (4 sites)"/>
</dbReference>
<dbReference type="GlyCosmos" id="Q92896">
    <property type="glycosylation" value="7 sites, 41 glycans"/>
</dbReference>
<dbReference type="GlyGen" id="Q92896">
    <property type="glycosylation" value="14 sites, 101 N-linked glycans (5 sites), 3 O-linked glycans (8 sites)"/>
</dbReference>
<dbReference type="iPTMnet" id="Q92896"/>
<dbReference type="MetOSite" id="Q92896"/>
<dbReference type="PhosphoSitePlus" id="Q92896"/>
<dbReference type="SwissPalm" id="Q92896"/>
<dbReference type="BioMuta" id="GLG1"/>
<dbReference type="DMDM" id="218512060"/>
<dbReference type="jPOST" id="Q92896"/>
<dbReference type="MassIVE" id="Q92896"/>
<dbReference type="PaxDb" id="9606-ENSP00000205061"/>
<dbReference type="PeptideAtlas" id="Q92896"/>
<dbReference type="ProteomicsDB" id="75578">
    <molecule id="Q92896-1"/>
</dbReference>
<dbReference type="ProteomicsDB" id="75579">
    <molecule id="Q92896-2"/>
</dbReference>
<dbReference type="ProteomicsDB" id="75580">
    <molecule id="Q92896-3"/>
</dbReference>
<dbReference type="Pumba" id="Q92896"/>
<dbReference type="Antibodypedia" id="2273">
    <property type="antibodies" value="333 antibodies from 27 providers"/>
</dbReference>
<dbReference type="DNASU" id="2734"/>
<dbReference type="Ensembl" id="ENST00000205061.9">
    <molecule id="Q92896-2"/>
    <property type="protein sequence ID" value="ENSP00000205061.5"/>
    <property type="gene ID" value="ENSG00000090863.12"/>
</dbReference>
<dbReference type="Ensembl" id="ENST00000422840.7">
    <molecule id="Q92896-1"/>
    <property type="protein sequence ID" value="ENSP00000405984.3"/>
    <property type="gene ID" value="ENSG00000090863.12"/>
</dbReference>
<dbReference type="Ensembl" id="ENST00000447066.6">
    <molecule id="Q92896-3"/>
    <property type="protein sequence ID" value="ENSP00000406946.2"/>
    <property type="gene ID" value="ENSG00000090863.12"/>
</dbReference>
<dbReference type="GeneID" id="2734"/>
<dbReference type="KEGG" id="hsa:2734"/>
<dbReference type="MANE-Select" id="ENST00000422840.7">
    <property type="protein sequence ID" value="ENSP00000405984.3"/>
    <property type="RefSeq nucleotide sequence ID" value="NM_001145667.2"/>
    <property type="RefSeq protein sequence ID" value="NP_001139139.1"/>
</dbReference>
<dbReference type="UCSC" id="uc002fcw.5">
    <molecule id="Q92896-1"/>
    <property type="organism name" value="human"/>
</dbReference>
<dbReference type="AGR" id="HGNC:4316"/>
<dbReference type="CTD" id="2734"/>
<dbReference type="DisGeNET" id="2734"/>
<dbReference type="GeneCards" id="GLG1"/>
<dbReference type="HGNC" id="HGNC:4316">
    <property type="gene designation" value="GLG1"/>
</dbReference>
<dbReference type="HPA" id="ENSG00000090863">
    <property type="expression patterns" value="Low tissue specificity"/>
</dbReference>
<dbReference type="MalaCards" id="GLG1"/>
<dbReference type="MIM" id="600753">
    <property type="type" value="gene"/>
</dbReference>
<dbReference type="neXtProt" id="NX_Q92896"/>
<dbReference type="OpenTargets" id="ENSG00000090863"/>
<dbReference type="PharmGKB" id="PA28719"/>
<dbReference type="VEuPathDB" id="HostDB:ENSG00000090863"/>
<dbReference type="eggNOG" id="KOG3648">
    <property type="taxonomic scope" value="Eukaryota"/>
</dbReference>
<dbReference type="GeneTree" id="ENSGT00390000011262"/>
<dbReference type="HOGENOM" id="CLU_011063_0_0_1"/>
<dbReference type="InParanoid" id="Q92896"/>
<dbReference type="OMA" id="MMECLIE"/>
<dbReference type="OrthoDB" id="2015434at2759"/>
<dbReference type="PAN-GO" id="Q92896">
    <property type="GO annotations" value="2 GO annotations based on evolutionary models"/>
</dbReference>
<dbReference type="PhylomeDB" id="Q92896"/>
<dbReference type="TreeFam" id="TF106112"/>
<dbReference type="PathwayCommons" id="Q92896"/>
<dbReference type="Reactome" id="R-HSA-202733">
    <property type="pathway name" value="Cell surface interactions at the vascular wall"/>
</dbReference>
<dbReference type="SignaLink" id="Q92896"/>
<dbReference type="BioGRID-ORCS" id="2734">
    <property type="hits" value="18 hits in 1157 CRISPR screens"/>
</dbReference>
<dbReference type="CD-CODE" id="FB4E32DD">
    <property type="entry name" value="Presynaptic clusters and postsynaptic densities"/>
</dbReference>
<dbReference type="ChiTaRS" id="GLG1">
    <property type="organism name" value="human"/>
</dbReference>
<dbReference type="GeneWiki" id="GLG1"/>
<dbReference type="GenomeRNAi" id="2734"/>
<dbReference type="Pharos" id="Q92896">
    <property type="development level" value="Tbio"/>
</dbReference>
<dbReference type="PRO" id="PR:Q92896"/>
<dbReference type="Proteomes" id="UP000005640">
    <property type="component" value="Chromosome 16"/>
</dbReference>
<dbReference type="RNAct" id="Q92896">
    <property type="molecule type" value="protein"/>
</dbReference>
<dbReference type="Bgee" id="ENSG00000090863">
    <property type="expression patterns" value="Expressed in stromal cell of endometrium and 222 other cell types or tissues"/>
</dbReference>
<dbReference type="ExpressionAtlas" id="Q92896">
    <property type="expression patterns" value="baseline and differential"/>
</dbReference>
<dbReference type="GO" id="GO:0070062">
    <property type="term" value="C:extracellular exosome"/>
    <property type="evidence" value="ECO:0007005"/>
    <property type="project" value="UniProtKB"/>
</dbReference>
<dbReference type="GO" id="GO:0031012">
    <property type="term" value="C:extracellular matrix"/>
    <property type="evidence" value="ECO:0007669"/>
    <property type="project" value="Ensembl"/>
</dbReference>
<dbReference type="GO" id="GO:0005794">
    <property type="term" value="C:Golgi apparatus"/>
    <property type="evidence" value="ECO:0000314"/>
    <property type="project" value="HPA"/>
</dbReference>
<dbReference type="GO" id="GO:0000139">
    <property type="term" value="C:Golgi membrane"/>
    <property type="evidence" value="ECO:0000318"/>
    <property type="project" value="GO_Central"/>
</dbReference>
<dbReference type="GO" id="GO:0016020">
    <property type="term" value="C:membrane"/>
    <property type="evidence" value="ECO:0007005"/>
    <property type="project" value="UniProtKB"/>
</dbReference>
<dbReference type="GO" id="GO:0005815">
    <property type="term" value="C:microtubule organizing center"/>
    <property type="evidence" value="ECO:0007669"/>
    <property type="project" value="UniProtKB-SubCell"/>
</dbReference>
<dbReference type="GO" id="GO:0005886">
    <property type="term" value="C:plasma membrane"/>
    <property type="evidence" value="ECO:0000304"/>
    <property type="project" value="Reactome"/>
</dbReference>
<dbReference type="GO" id="GO:0017134">
    <property type="term" value="F:fibroblast growth factor binding"/>
    <property type="evidence" value="ECO:0000318"/>
    <property type="project" value="GO_Central"/>
</dbReference>
<dbReference type="GO" id="GO:0005102">
    <property type="term" value="F:signaling receptor binding"/>
    <property type="evidence" value="ECO:0000304"/>
    <property type="project" value="ProtInc"/>
</dbReference>
<dbReference type="GO" id="GO:0060349">
    <property type="term" value="P:bone morphogenesis"/>
    <property type="evidence" value="ECO:0007669"/>
    <property type="project" value="Ensembl"/>
</dbReference>
<dbReference type="GO" id="GO:0010955">
    <property type="term" value="P:negative regulation of protein processing"/>
    <property type="evidence" value="ECO:0007669"/>
    <property type="project" value="Ensembl"/>
</dbReference>
<dbReference type="GO" id="GO:0030512">
    <property type="term" value="P:negative regulation of transforming growth factor beta receptor signaling pathway"/>
    <property type="evidence" value="ECO:0007669"/>
    <property type="project" value="Ensembl"/>
</dbReference>
<dbReference type="GO" id="GO:0016485">
    <property type="term" value="P:protein processing"/>
    <property type="evidence" value="ECO:0007669"/>
    <property type="project" value="Ensembl"/>
</dbReference>
<dbReference type="GO" id="GO:0032330">
    <property type="term" value="P:regulation of chondrocyte differentiation"/>
    <property type="evidence" value="ECO:0007669"/>
    <property type="project" value="Ensembl"/>
</dbReference>
<dbReference type="GO" id="GO:0007179">
    <property type="term" value="P:transforming growth factor beta receptor signaling pathway"/>
    <property type="evidence" value="ECO:0007669"/>
    <property type="project" value="Ensembl"/>
</dbReference>
<dbReference type="InterPro" id="IPR001893">
    <property type="entry name" value="Cys-rich_GLG1_repeat"/>
</dbReference>
<dbReference type="InterPro" id="IPR017873">
    <property type="entry name" value="Cys-rich_GLG1_repeat_euk"/>
</dbReference>
<dbReference type="InterPro" id="IPR039728">
    <property type="entry name" value="GLG1"/>
</dbReference>
<dbReference type="PANTHER" id="PTHR11884:SF1">
    <property type="entry name" value="GOLGI APPARATUS PROTEIN 1"/>
    <property type="match status" value="1"/>
</dbReference>
<dbReference type="PANTHER" id="PTHR11884">
    <property type="entry name" value="SELECTIN LIGAND RELATED"/>
    <property type="match status" value="1"/>
</dbReference>
<dbReference type="Pfam" id="PF00839">
    <property type="entry name" value="Cys_rich_FGFR"/>
    <property type="match status" value="15"/>
</dbReference>
<dbReference type="PROSITE" id="PS51289">
    <property type="entry name" value="GLG1_C_RICH"/>
    <property type="match status" value="16"/>
</dbReference>
<accession>Q92896</accession>
<accession>B7Z8Y4</accession>
<accession>D3DUJ7</accession>
<accession>Q13221</accession>
<accession>Q6P9D1</accession>
<gene>
    <name type="primary">GLG1</name>
    <name type="synonym">CFR1</name>
    <name type="synonym">ESL1</name>
    <name type="synonym">MG160</name>
</gene>